<dbReference type="EMBL" id="AK001862">
    <property type="protein sequence ID" value="BAA91948.1"/>
    <property type="molecule type" value="mRNA"/>
</dbReference>
<dbReference type="EMBL" id="AC083862">
    <property type="status" value="NOT_ANNOTATED_CDS"/>
    <property type="molecule type" value="Genomic_DNA"/>
</dbReference>
<dbReference type="EMBL" id="CH236950">
    <property type="protein sequence ID" value="EAL24065.1"/>
    <property type="molecule type" value="Genomic_DNA"/>
</dbReference>
<dbReference type="EMBL" id="BC020942">
    <property type="protein sequence ID" value="AAH20942.1"/>
    <property type="molecule type" value="mRNA"/>
</dbReference>
<dbReference type="CCDS" id="CCDS5837.1"/>
<dbReference type="RefSeq" id="NP_060765.4">
    <property type="nucleotide sequence ID" value="NM_018295.5"/>
</dbReference>
<dbReference type="BioGRID" id="120569">
    <property type="interactions" value="58"/>
</dbReference>
<dbReference type="FunCoup" id="Q9NV12">
    <property type="interactions" value="57"/>
</dbReference>
<dbReference type="IntAct" id="Q9NV12">
    <property type="interactions" value="54"/>
</dbReference>
<dbReference type="MINT" id="Q9NV12"/>
<dbReference type="STRING" id="9606.ENSP00000275767"/>
<dbReference type="GlyCosmos" id="Q9NV12">
    <property type="glycosylation" value="1 site, No reported glycans"/>
</dbReference>
<dbReference type="GlyGen" id="Q9NV12">
    <property type="glycosylation" value="1 site"/>
</dbReference>
<dbReference type="iPTMnet" id="Q9NV12"/>
<dbReference type="PhosphoSitePlus" id="Q9NV12"/>
<dbReference type="BioMuta" id="TMEM140"/>
<dbReference type="DMDM" id="296452934"/>
<dbReference type="PaxDb" id="9606-ENSP00000275767"/>
<dbReference type="PeptideAtlas" id="Q9NV12"/>
<dbReference type="Antibodypedia" id="18112">
    <property type="antibodies" value="29 antibodies from 7 providers"/>
</dbReference>
<dbReference type="DNASU" id="55281"/>
<dbReference type="Ensembl" id="ENST00000275767.3">
    <property type="protein sequence ID" value="ENSP00000275767.2"/>
    <property type="gene ID" value="ENSG00000146859.6"/>
</dbReference>
<dbReference type="GeneID" id="55281"/>
<dbReference type="KEGG" id="hsa:55281"/>
<dbReference type="MANE-Select" id="ENST00000275767.3">
    <property type="protein sequence ID" value="ENSP00000275767.2"/>
    <property type="RefSeq nucleotide sequence ID" value="NM_018295.5"/>
    <property type="RefSeq protein sequence ID" value="NP_060765.4"/>
</dbReference>
<dbReference type="UCSC" id="uc003vsi.4">
    <property type="organism name" value="human"/>
</dbReference>
<dbReference type="AGR" id="HGNC:21870"/>
<dbReference type="CTD" id="55281"/>
<dbReference type="DisGeNET" id="55281"/>
<dbReference type="GeneCards" id="TMEM140"/>
<dbReference type="HGNC" id="HGNC:21870">
    <property type="gene designation" value="TMEM140"/>
</dbReference>
<dbReference type="HPA" id="ENSG00000146859">
    <property type="expression patterns" value="Tissue enhanced (skeletal)"/>
</dbReference>
<dbReference type="neXtProt" id="NX_Q9NV12"/>
<dbReference type="OpenTargets" id="ENSG00000146859"/>
<dbReference type="PharmGKB" id="PA144596261"/>
<dbReference type="VEuPathDB" id="HostDB:ENSG00000146859"/>
<dbReference type="eggNOG" id="ENOG502S6FP">
    <property type="taxonomic scope" value="Eukaryota"/>
</dbReference>
<dbReference type="GeneTree" id="ENSGT00390000014089"/>
<dbReference type="HOGENOM" id="CLU_125527_0_0_1"/>
<dbReference type="InParanoid" id="Q9NV12"/>
<dbReference type="OMA" id="DQLLFMS"/>
<dbReference type="OrthoDB" id="9898473at2759"/>
<dbReference type="PAN-GO" id="Q9NV12">
    <property type="GO annotations" value="0 GO annotations based on evolutionary models"/>
</dbReference>
<dbReference type="PhylomeDB" id="Q9NV12"/>
<dbReference type="TreeFam" id="TF336296"/>
<dbReference type="PathwayCommons" id="Q9NV12"/>
<dbReference type="SignaLink" id="Q9NV12"/>
<dbReference type="BioGRID-ORCS" id="55281">
    <property type="hits" value="12 hits in 1159 CRISPR screens"/>
</dbReference>
<dbReference type="ChiTaRS" id="TMEM140">
    <property type="organism name" value="human"/>
</dbReference>
<dbReference type="GenomeRNAi" id="55281"/>
<dbReference type="Pharos" id="Q9NV12">
    <property type="development level" value="Tdark"/>
</dbReference>
<dbReference type="PRO" id="PR:Q9NV12"/>
<dbReference type="Proteomes" id="UP000005640">
    <property type="component" value="Chromosome 7"/>
</dbReference>
<dbReference type="RNAct" id="Q9NV12">
    <property type="molecule type" value="protein"/>
</dbReference>
<dbReference type="Bgee" id="ENSG00000146859">
    <property type="expression patterns" value="Expressed in blood and 160 other cell types or tissues"/>
</dbReference>
<dbReference type="GO" id="GO:0016020">
    <property type="term" value="C:membrane"/>
    <property type="evidence" value="ECO:0007669"/>
    <property type="project" value="UniProtKB-SubCell"/>
</dbReference>
<dbReference type="InterPro" id="IPR028038">
    <property type="entry name" value="TM140"/>
</dbReference>
<dbReference type="PANTHER" id="PTHR16103">
    <property type="entry name" value="TRANSMEMBRANE PROTEIN 140"/>
    <property type="match status" value="1"/>
</dbReference>
<dbReference type="PANTHER" id="PTHR16103:SF0">
    <property type="entry name" value="TRANSMEMBRANE PROTEIN 140"/>
    <property type="match status" value="1"/>
</dbReference>
<dbReference type="Pfam" id="PF14985">
    <property type="entry name" value="TM140"/>
    <property type="match status" value="1"/>
</dbReference>
<name>TM140_HUMAN</name>
<comment type="interaction">
    <interactant intactId="EBI-2844246">
        <id>Q9NV12</id>
    </interactant>
    <interactant intactId="EBI-2606935">
        <id>Q96BI3</id>
        <label>APH1A</label>
    </interactant>
    <organismsDiffer>false</organismsDiffer>
    <experiments>3</experiments>
</comment>
<comment type="interaction">
    <interactant intactId="EBI-2844246">
        <id>Q9NV12</id>
    </interactant>
    <interactant intactId="EBI-13059134">
        <id>Q13520</id>
        <label>AQP6</label>
    </interactant>
    <organismsDiffer>false</organismsDiffer>
    <experiments>3</experiments>
</comment>
<comment type="interaction">
    <interactant intactId="EBI-2844246">
        <id>Q9NV12</id>
    </interactant>
    <interactant intactId="EBI-12808270">
        <id>P07307-3</id>
        <label>ASGR2</label>
    </interactant>
    <organismsDiffer>false</organismsDiffer>
    <experiments>3</experiments>
</comment>
<comment type="interaction">
    <interactant intactId="EBI-2844246">
        <id>Q9NV12</id>
    </interactant>
    <interactant intactId="EBI-13320645">
        <id>P20273-5</id>
        <label>CD22</label>
    </interactant>
    <organismsDiffer>false</organismsDiffer>
    <experiments>3</experiments>
</comment>
<comment type="interaction">
    <interactant intactId="EBI-2844246">
        <id>Q9NV12</id>
    </interactant>
    <interactant intactId="EBI-6657396">
        <id>P19397</id>
        <label>CD53</label>
    </interactant>
    <organismsDiffer>false</organismsDiffer>
    <experiments>3</experiments>
</comment>
<comment type="interaction">
    <interactant intactId="EBI-2844246">
        <id>Q9NV12</id>
    </interactant>
    <interactant intactId="EBI-7797864">
        <id>P11912</id>
        <label>CD79A</label>
    </interactant>
    <organismsDiffer>false</organismsDiffer>
    <experiments>3</experiments>
</comment>
<comment type="interaction">
    <interactant intactId="EBI-2844246">
        <id>Q9NV12</id>
    </interactant>
    <interactant intactId="EBI-2130213">
        <id>Q99675</id>
        <label>CGRRF1</label>
    </interactant>
    <organismsDiffer>false</organismsDiffer>
    <experiments>3</experiments>
</comment>
<comment type="interaction">
    <interactant intactId="EBI-2844246">
        <id>Q9NV12</id>
    </interactant>
    <interactant intactId="EBI-18400628">
        <id>O00501</id>
        <label>CLDN5</label>
    </interactant>
    <organismsDiffer>false</organismsDiffer>
    <experiments>3</experiments>
</comment>
<comment type="interaction">
    <interactant intactId="EBI-2844246">
        <id>Q9NV12</id>
    </interactant>
    <interactant intactId="EBI-740744">
        <id>O95471</id>
        <label>CLDN7</label>
    </interactant>
    <organismsDiffer>false</organismsDiffer>
    <experiments>3</experiments>
</comment>
<comment type="interaction">
    <interactant intactId="EBI-2844246">
        <id>Q9NV12</id>
    </interactant>
    <interactant intactId="EBI-11977093">
        <id>Q6ZS10</id>
        <label>CLEC17A</label>
    </interactant>
    <organismsDiffer>false</organismsDiffer>
    <experiments>3</experiments>
</comment>
<comment type="interaction">
    <interactant intactId="EBI-2844246">
        <id>Q9NV12</id>
    </interactant>
    <interactant intactId="EBI-17274839">
        <id>P58418</id>
        <label>CLRN1</label>
    </interactant>
    <organismsDiffer>false</organismsDiffer>
    <experiments>3</experiments>
</comment>
<comment type="interaction">
    <interactant intactId="EBI-2844246">
        <id>Q9NV12</id>
    </interactant>
    <interactant intactId="EBI-3915253">
        <id>Q15125</id>
        <label>EBP</label>
    </interactant>
    <organismsDiffer>false</organismsDiffer>
    <experiments>3</experiments>
</comment>
<comment type="interaction">
    <interactant intactId="EBI-2844246">
        <id>Q9NV12</id>
    </interactant>
    <interactant intactId="EBI-18304435">
        <id>Q5JX71</id>
        <label>FAM209A</label>
    </interactant>
    <organismsDiffer>false</organismsDiffer>
    <experiments>3</experiments>
</comment>
<comment type="interaction">
    <interactant intactId="EBI-2844246">
        <id>Q9NV12</id>
    </interactant>
    <interactant intactId="EBI-18938272">
        <id>Q96KR6</id>
        <label>FAM210B</label>
    </interactant>
    <organismsDiffer>false</organismsDiffer>
    <experiments>3</experiments>
</comment>
<comment type="interaction">
    <interactant intactId="EBI-2844246">
        <id>Q9NV12</id>
    </interactant>
    <interactant intactId="EBI-12142257">
        <id>Q8TBE3</id>
        <label>FNDC9</label>
    </interactant>
    <organismsDiffer>false</organismsDiffer>
    <experiments>3</experiments>
</comment>
<comment type="interaction">
    <interactant intactId="EBI-2844246">
        <id>Q9NV12</id>
    </interactant>
    <interactant intactId="EBI-712073">
        <id>Q8NBJ4</id>
        <label>GOLM1</label>
    </interactant>
    <organismsDiffer>false</organismsDiffer>
    <experiments>3</experiments>
</comment>
<comment type="interaction">
    <interactant intactId="EBI-2844246">
        <id>Q9NV12</id>
    </interactant>
    <interactant intactId="EBI-13345167">
        <id>Q8TDT2</id>
        <label>GPR152</label>
    </interactant>
    <organismsDiffer>false</organismsDiffer>
    <experiments>3</experiments>
</comment>
<comment type="interaction">
    <interactant intactId="EBI-2844246">
        <id>Q9NV12</id>
    </interactant>
    <interactant intactId="EBI-18076404">
        <id>O15529</id>
        <label>GPR42</label>
    </interactant>
    <organismsDiffer>false</organismsDiffer>
    <experiments>3</experiments>
</comment>
<comment type="interaction">
    <interactant intactId="EBI-2844246">
        <id>Q9NV12</id>
    </interactant>
    <interactant intactId="EBI-2867874">
        <id>Q9UM44</id>
        <label>HHLA2</label>
    </interactant>
    <organismsDiffer>false</organismsDiffer>
    <experiments>3</experiments>
</comment>
<comment type="interaction">
    <interactant intactId="EBI-2844246">
        <id>Q9NV12</id>
    </interactant>
    <interactant intactId="EBI-18053395">
        <id>Q7Z5P4</id>
        <label>HSD17B13</label>
    </interactant>
    <organismsDiffer>false</organismsDiffer>
    <experiments>3</experiments>
</comment>
<comment type="interaction">
    <interactant intactId="EBI-2844246">
        <id>Q9NV12</id>
    </interactant>
    <interactant intactId="EBI-3905457">
        <id>P38484</id>
        <label>IFNGR2</label>
    </interactant>
    <organismsDiffer>false</organismsDiffer>
    <experiments>3</experiments>
</comment>
<comment type="interaction">
    <interactant intactId="EBI-2844246">
        <id>Q9NV12</id>
    </interactant>
    <interactant intactId="EBI-17440235">
        <id>Q15842</id>
        <label>KCNJ8</label>
    </interactant>
    <organismsDiffer>false</organismsDiffer>
    <experiments>3</experiments>
</comment>
<comment type="interaction">
    <interactant intactId="EBI-2844246">
        <id>Q9NV12</id>
    </interactant>
    <interactant intactId="EBI-10171774">
        <id>P60410</id>
        <label>KRTAP10-8</label>
    </interactant>
    <organismsDiffer>false</organismsDiffer>
    <experiments>3</experiments>
</comment>
<comment type="interaction">
    <interactant intactId="EBI-2844246">
        <id>Q9NV12</id>
    </interactant>
    <interactant intactId="EBI-18234679">
        <id>Q16553</id>
        <label>LY6E</label>
    </interactant>
    <organismsDiffer>false</organismsDiffer>
    <experiments>3</experiments>
</comment>
<comment type="interaction">
    <interactant intactId="EBI-2844246">
        <id>Q9NV12</id>
    </interactant>
    <interactant intactId="EBI-11956541">
        <id>Q9GZY8-5</id>
        <label>MFF</label>
    </interactant>
    <organismsDiffer>false</organismsDiffer>
    <experiments>3</experiments>
</comment>
<comment type="interaction">
    <interactant intactId="EBI-2844246">
        <id>Q9NV12</id>
    </interactant>
    <interactant intactId="EBI-724754">
        <id>O14880</id>
        <label>MGST3</label>
    </interactant>
    <organismsDiffer>false</organismsDiffer>
    <experiments>3</experiments>
</comment>
<comment type="interaction">
    <interactant intactId="EBI-2844246">
        <id>Q9NV12</id>
    </interactant>
    <interactant intactId="EBI-18391669">
        <id>Q7Z6M3</id>
        <label>MILR1</label>
    </interactant>
    <organismsDiffer>false</organismsDiffer>
    <experiments>3</experiments>
</comment>
<comment type="interaction">
    <interactant intactId="EBI-2844246">
        <id>Q9NV12</id>
    </interactant>
    <interactant intactId="EBI-12806656">
        <id>Q96HJ5</id>
        <label>MS4A3</label>
    </interactant>
    <organismsDiffer>false</organismsDiffer>
    <experiments>3</experiments>
</comment>
<comment type="interaction">
    <interactant intactId="EBI-2844246">
        <id>Q9NV12</id>
    </interactant>
    <interactant intactId="EBI-949102">
        <id>Q15800</id>
        <label>MSMO1</label>
    </interactant>
    <organismsDiffer>false</organismsDiffer>
    <experiments>3</experiments>
</comment>
<comment type="interaction">
    <interactant intactId="EBI-2844246">
        <id>Q9NV12</id>
    </interactant>
    <interactant intactId="EBI-716063">
        <id>Q13113</id>
        <label>PDZK1IP1</label>
    </interactant>
    <organismsDiffer>false</organismsDiffer>
    <experiments>3</experiments>
</comment>
<comment type="interaction">
    <interactant intactId="EBI-2844246">
        <id>Q9NV12</id>
    </interactant>
    <interactant intactId="EBI-1056589">
        <id>Q96TC7</id>
        <label>RMDN3</label>
    </interactant>
    <organismsDiffer>false</organismsDiffer>
    <experiments>3</experiments>
</comment>
<comment type="interaction">
    <interactant intactId="EBI-2844246">
        <id>Q9NV12</id>
    </interactant>
    <interactant intactId="EBI-17247926">
        <id>Q9NY72</id>
        <label>SCN3B</label>
    </interactant>
    <organismsDiffer>false</organismsDiffer>
    <experiments>3</experiments>
</comment>
<comment type="interaction">
    <interactant intactId="EBI-2844246">
        <id>Q9NV12</id>
    </interactant>
    <interactant intactId="EBI-18037857">
        <id>Q3SXP7</id>
        <label>SHISAL1</label>
    </interactant>
    <organismsDiffer>false</organismsDiffer>
    <experiments>3</experiments>
</comment>
<comment type="interaction">
    <interactant intactId="EBI-2844246">
        <id>Q9NV12</id>
    </interactant>
    <interactant intactId="EBI-6977215">
        <id>Q9Y3P8</id>
        <label>SIT1</label>
    </interactant>
    <organismsDiffer>false</organismsDiffer>
    <experiments>3</experiments>
</comment>
<comment type="interaction">
    <interactant intactId="EBI-2844246">
        <id>Q9NV12</id>
    </interactant>
    <interactant intactId="EBI-2823239">
        <id>Q9NUM3</id>
        <label>SLC39A9</label>
    </interactant>
    <organismsDiffer>false</organismsDiffer>
    <experiments>3</experiments>
</comment>
<comment type="interaction">
    <interactant intactId="EBI-2844246">
        <id>Q9NV12</id>
    </interactant>
    <interactant intactId="EBI-17498703">
        <id>Q9HBV2</id>
        <label>SPACA1</label>
    </interactant>
    <organismsDiffer>false</organismsDiffer>
    <experiments>3</experiments>
</comment>
<comment type="interaction">
    <interactant intactId="EBI-2844246">
        <id>Q9NV12</id>
    </interactant>
    <interactant intactId="EBI-1211440">
        <id>P27105</id>
        <label>STOM</label>
    </interactant>
    <organismsDiffer>false</organismsDiffer>
    <experiments>3</experiments>
</comment>
<comment type="interaction">
    <interactant intactId="EBI-2844246">
        <id>Q9NV12</id>
    </interactant>
    <interactant intactId="EBI-7131783">
        <id>Q8N205</id>
        <label>SYNE4</label>
    </interactant>
    <organismsDiffer>false</organismsDiffer>
    <experiments>3</experiments>
</comment>
<comment type="interaction">
    <interactant intactId="EBI-2844246">
        <id>Q9NV12</id>
    </interactant>
    <interactant intactId="EBI-19027521">
        <id>Q8N6K0</id>
        <label>TEX29</label>
    </interactant>
    <organismsDiffer>false</organismsDiffer>
    <experiments>3</experiments>
</comment>
<comment type="interaction">
    <interactant intactId="EBI-2844246">
        <id>Q9NV12</id>
    </interactant>
    <interactant intactId="EBI-10255122">
        <id>Q6ZP80</id>
        <label>TMEM182</label>
    </interactant>
    <organismsDiffer>false</organismsDiffer>
    <experiments>3</experiments>
</comment>
<comment type="interaction">
    <interactant intactId="EBI-2844246">
        <id>Q9NV12</id>
    </interactant>
    <interactant intactId="EBI-6269551">
        <id>Q6UW68</id>
        <label>TMEM205</label>
    </interactant>
    <organismsDiffer>false</organismsDiffer>
    <experiments>3</experiments>
</comment>
<comment type="interaction">
    <interactant intactId="EBI-2844246">
        <id>Q9NV12</id>
    </interactant>
    <interactant intactId="EBI-13301303">
        <id>Q6UWW9</id>
        <label>TMEM207</label>
    </interactant>
    <organismsDiffer>false</organismsDiffer>
    <experiments>3</experiments>
</comment>
<comment type="interaction">
    <interactant intactId="EBI-2844246">
        <id>Q9NV12</id>
    </interactant>
    <interactant intactId="EBI-723976">
        <id>Q9P0T7</id>
        <label>TMEM9</label>
    </interactant>
    <organismsDiffer>false</organismsDiffer>
    <experiments>3</experiments>
</comment>
<comment type="interaction">
    <interactant intactId="EBI-2844246">
        <id>Q9NV12</id>
    </interactant>
    <interactant intactId="EBI-6447886">
        <id>Q9Y320</id>
        <label>TMX2</label>
    </interactant>
    <organismsDiffer>false</organismsDiffer>
    <experiments>3</experiments>
</comment>
<comment type="interaction">
    <interactant intactId="EBI-2844246">
        <id>Q9NV12</id>
    </interactant>
    <interactant intactId="EBI-2466403">
        <id>O95859</id>
        <label>TSPAN12</label>
    </interactant>
    <organismsDiffer>false</organismsDiffer>
    <experiments>3</experiments>
</comment>
<comment type="interaction">
    <interactant intactId="EBI-2844246">
        <id>Q9NV12</id>
    </interactant>
    <interactant intactId="EBI-12195249">
        <id>Q5TGU0</id>
        <label>TSPO2</label>
    </interactant>
    <organismsDiffer>false</organismsDiffer>
    <experiments>3</experiments>
</comment>
<comment type="subcellular location">
    <subcellularLocation>
        <location evidence="7">Membrane</location>
        <topology evidence="7">Multi-pass membrane protein</topology>
    </subcellularLocation>
</comment>
<comment type="tissue specificity">
    <text evidence="6">Expression significantly higher in gliomas than in normal brain tissues.</text>
</comment>
<proteinExistence type="evidence at protein level"/>
<protein>
    <recommendedName>
        <fullName>Transmembrane protein 140</fullName>
    </recommendedName>
</protein>
<keyword id="KW-0325">Glycoprotein</keyword>
<keyword id="KW-0472">Membrane</keyword>
<keyword id="KW-1267">Proteomics identification</keyword>
<keyword id="KW-1185">Reference proteome</keyword>
<keyword id="KW-0812">Transmembrane</keyword>
<keyword id="KW-1133">Transmembrane helix</keyword>
<reference key="1">
    <citation type="journal article" date="2004" name="Nat. Genet.">
        <title>Complete sequencing and characterization of 21,243 full-length human cDNAs.</title>
        <authorList>
            <person name="Ota T."/>
            <person name="Suzuki Y."/>
            <person name="Nishikawa T."/>
            <person name="Otsuki T."/>
            <person name="Sugiyama T."/>
            <person name="Irie R."/>
            <person name="Wakamatsu A."/>
            <person name="Hayashi K."/>
            <person name="Sato H."/>
            <person name="Nagai K."/>
            <person name="Kimura K."/>
            <person name="Makita H."/>
            <person name="Sekine M."/>
            <person name="Obayashi M."/>
            <person name="Nishi T."/>
            <person name="Shibahara T."/>
            <person name="Tanaka T."/>
            <person name="Ishii S."/>
            <person name="Yamamoto J."/>
            <person name="Saito K."/>
            <person name="Kawai Y."/>
            <person name="Isono Y."/>
            <person name="Nakamura Y."/>
            <person name="Nagahari K."/>
            <person name="Murakami K."/>
            <person name="Yasuda T."/>
            <person name="Iwayanagi T."/>
            <person name="Wagatsuma M."/>
            <person name="Shiratori A."/>
            <person name="Sudo H."/>
            <person name="Hosoiri T."/>
            <person name="Kaku Y."/>
            <person name="Kodaira H."/>
            <person name="Kondo H."/>
            <person name="Sugawara M."/>
            <person name="Takahashi M."/>
            <person name="Kanda K."/>
            <person name="Yokoi T."/>
            <person name="Furuya T."/>
            <person name="Kikkawa E."/>
            <person name="Omura Y."/>
            <person name="Abe K."/>
            <person name="Kamihara K."/>
            <person name="Katsuta N."/>
            <person name="Sato K."/>
            <person name="Tanikawa M."/>
            <person name="Yamazaki M."/>
            <person name="Ninomiya K."/>
            <person name="Ishibashi T."/>
            <person name="Yamashita H."/>
            <person name="Murakawa K."/>
            <person name="Fujimori K."/>
            <person name="Tanai H."/>
            <person name="Kimata M."/>
            <person name="Watanabe M."/>
            <person name="Hiraoka S."/>
            <person name="Chiba Y."/>
            <person name="Ishida S."/>
            <person name="Ono Y."/>
            <person name="Takiguchi S."/>
            <person name="Watanabe S."/>
            <person name="Yosida M."/>
            <person name="Hotuta T."/>
            <person name="Kusano J."/>
            <person name="Kanehori K."/>
            <person name="Takahashi-Fujii A."/>
            <person name="Hara H."/>
            <person name="Tanase T.-O."/>
            <person name="Nomura Y."/>
            <person name="Togiya S."/>
            <person name="Komai F."/>
            <person name="Hara R."/>
            <person name="Takeuchi K."/>
            <person name="Arita M."/>
            <person name="Imose N."/>
            <person name="Musashino K."/>
            <person name="Yuuki H."/>
            <person name="Oshima A."/>
            <person name="Sasaki N."/>
            <person name="Aotsuka S."/>
            <person name="Yoshikawa Y."/>
            <person name="Matsunawa H."/>
            <person name="Ichihara T."/>
            <person name="Shiohata N."/>
            <person name="Sano S."/>
            <person name="Moriya S."/>
            <person name="Momiyama H."/>
            <person name="Satoh N."/>
            <person name="Takami S."/>
            <person name="Terashima Y."/>
            <person name="Suzuki O."/>
            <person name="Nakagawa S."/>
            <person name="Senoh A."/>
            <person name="Mizoguchi H."/>
            <person name="Goto Y."/>
            <person name="Shimizu F."/>
            <person name="Wakebe H."/>
            <person name="Hishigaki H."/>
            <person name="Watanabe T."/>
            <person name="Sugiyama A."/>
            <person name="Takemoto M."/>
            <person name="Kawakami B."/>
            <person name="Yamazaki M."/>
            <person name="Watanabe K."/>
            <person name="Kumagai A."/>
            <person name="Itakura S."/>
            <person name="Fukuzumi Y."/>
            <person name="Fujimori Y."/>
            <person name="Komiyama M."/>
            <person name="Tashiro H."/>
            <person name="Tanigami A."/>
            <person name="Fujiwara T."/>
            <person name="Ono T."/>
            <person name="Yamada K."/>
            <person name="Fujii Y."/>
            <person name="Ozaki K."/>
            <person name="Hirao M."/>
            <person name="Ohmori Y."/>
            <person name="Kawabata A."/>
            <person name="Hikiji T."/>
            <person name="Kobatake N."/>
            <person name="Inagaki H."/>
            <person name="Ikema Y."/>
            <person name="Okamoto S."/>
            <person name="Okitani R."/>
            <person name="Kawakami T."/>
            <person name="Noguchi S."/>
            <person name="Itoh T."/>
            <person name="Shigeta K."/>
            <person name="Senba T."/>
            <person name="Matsumura K."/>
            <person name="Nakajima Y."/>
            <person name="Mizuno T."/>
            <person name="Morinaga M."/>
            <person name="Sasaki M."/>
            <person name="Togashi T."/>
            <person name="Oyama M."/>
            <person name="Hata H."/>
            <person name="Watanabe M."/>
            <person name="Komatsu T."/>
            <person name="Mizushima-Sugano J."/>
            <person name="Satoh T."/>
            <person name="Shirai Y."/>
            <person name="Takahashi Y."/>
            <person name="Nakagawa K."/>
            <person name="Okumura K."/>
            <person name="Nagase T."/>
            <person name="Nomura N."/>
            <person name="Kikuchi H."/>
            <person name="Masuho Y."/>
            <person name="Yamashita R."/>
            <person name="Nakai K."/>
            <person name="Yada T."/>
            <person name="Nakamura Y."/>
            <person name="Ohara O."/>
            <person name="Isogai T."/>
            <person name="Sugano S."/>
        </authorList>
    </citation>
    <scope>NUCLEOTIDE SEQUENCE [LARGE SCALE MRNA]</scope>
    <scope>VARIANT LEU-29</scope>
    <source>
        <tissue>Placenta</tissue>
    </source>
</reference>
<reference key="2">
    <citation type="journal article" date="2003" name="Nature">
        <title>The DNA sequence of human chromosome 7.</title>
        <authorList>
            <person name="Hillier L.W."/>
            <person name="Fulton R.S."/>
            <person name="Fulton L.A."/>
            <person name="Graves T.A."/>
            <person name="Pepin K.H."/>
            <person name="Wagner-McPherson C."/>
            <person name="Layman D."/>
            <person name="Maas J."/>
            <person name="Jaeger S."/>
            <person name="Walker R."/>
            <person name="Wylie K."/>
            <person name="Sekhon M."/>
            <person name="Becker M.C."/>
            <person name="O'Laughlin M.D."/>
            <person name="Schaller M.E."/>
            <person name="Fewell G.A."/>
            <person name="Delehaunty K.D."/>
            <person name="Miner T.L."/>
            <person name="Nash W.E."/>
            <person name="Cordes M."/>
            <person name="Du H."/>
            <person name="Sun H."/>
            <person name="Edwards J."/>
            <person name="Bradshaw-Cordum H."/>
            <person name="Ali J."/>
            <person name="Andrews S."/>
            <person name="Isak A."/>
            <person name="Vanbrunt A."/>
            <person name="Nguyen C."/>
            <person name="Du F."/>
            <person name="Lamar B."/>
            <person name="Courtney L."/>
            <person name="Kalicki J."/>
            <person name="Ozersky P."/>
            <person name="Bielicki L."/>
            <person name="Scott K."/>
            <person name="Holmes A."/>
            <person name="Harkins R."/>
            <person name="Harris A."/>
            <person name="Strong C.M."/>
            <person name="Hou S."/>
            <person name="Tomlinson C."/>
            <person name="Dauphin-Kohlberg S."/>
            <person name="Kozlowicz-Reilly A."/>
            <person name="Leonard S."/>
            <person name="Rohlfing T."/>
            <person name="Rock S.M."/>
            <person name="Tin-Wollam A.-M."/>
            <person name="Abbott A."/>
            <person name="Minx P."/>
            <person name="Maupin R."/>
            <person name="Strowmatt C."/>
            <person name="Latreille P."/>
            <person name="Miller N."/>
            <person name="Johnson D."/>
            <person name="Murray J."/>
            <person name="Woessner J.P."/>
            <person name="Wendl M.C."/>
            <person name="Yang S.-P."/>
            <person name="Schultz B.R."/>
            <person name="Wallis J.W."/>
            <person name="Spieth J."/>
            <person name="Bieri T.A."/>
            <person name="Nelson J.O."/>
            <person name="Berkowicz N."/>
            <person name="Wohldmann P.E."/>
            <person name="Cook L.L."/>
            <person name="Hickenbotham M.T."/>
            <person name="Eldred J."/>
            <person name="Williams D."/>
            <person name="Bedell J.A."/>
            <person name="Mardis E.R."/>
            <person name="Clifton S.W."/>
            <person name="Chissoe S.L."/>
            <person name="Marra M.A."/>
            <person name="Raymond C."/>
            <person name="Haugen E."/>
            <person name="Gillett W."/>
            <person name="Zhou Y."/>
            <person name="James R."/>
            <person name="Phelps K."/>
            <person name="Iadanoto S."/>
            <person name="Bubb K."/>
            <person name="Simms E."/>
            <person name="Levy R."/>
            <person name="Clendenning J."/>
            <person name="Kaul R."/>
            <person name="Kent W.J."/>
            <person name="Furey T.S."/>
            <person name="Baertsch R.A."/>
            <person name="Brent M.R."/>
            <person name="Keibler E."/>
            <person name="Flicek P."/>
            <person name="Bork P."/>
            <person name="Suyama M."/>
            <person name="Bailey J.A."/>
            <person name="Portnoy M.E."/>
            <person name="Torrents D."/>
            <person name="Chinwalla A.T."/>
            <person name="Gish W.R."/>
            <person name="Eddy S.R."/>
            <person name="McPherson J.D."/>
            <person name="Olson M.V."/>
            <person name="Eichler E.E."/>
            <person name="Green E.D."/>
            <person name="Waterston R.H."/>
            <person name="Wilson R.K."/>
        </authorList>
    </citation>
    <scope>NUCLEOTIDE SEQUENCE [LARGE SCALE GENOMIC DNA]</scope>
</reference>
<reference key="3">
    <citation type="journal article" date="2003" name="Science">
        <title>Human chromosome 7: DNA sequence and biology.</title>
        <authorList>
            <person name="Scherer S.W."/>
            <person name="Cheung J."/>
            <person name="MacDonald J.R."/>
            <person name="Osborne L.R."/>
            <person name="Nakabayashi K."/>
            <person name="Herbrick J.-A."/>
            <person name="Carson A.R."/>
            <person name="Parker-Katiraee L."/>
            <person name="Skaug J."/>
            <person name="Khaja R."/>
            <person name="Zhang J."/>
            <person name="Hudek A.K."/>
            <person name="Li M."/>
            <person name="Haddad M."/>
            <person name="Duggan G.E."/>
            <person name="Fernandez B.A."/>
            <person name="Kanematsu E."/>
            <person name="Gentles S."/>
            <person name="Christopoulos C.C."/>
            <person name="Choufani S."/>
            <person name="Kwasnicka D."/>
            <person name="Zheng X.H."/>
            <person name="Lai Z."/>
            <person name="Nusskern D.R."/>
            <person name="Zhang Q."/>
            <person name="Gu Z."/>
            <person name="Lu F."/>
            <person name="Zeesman S."/>
            <person name="Nowaczyk M.J."/>
            <person name="Teshima I."/>
            <person name="Chitayat D."/>
            <person name="Shuman C."/>
            <person name="Weksberg R."/>
            <person name="Zackai E.H."/>
            <person name="Grebe T.A."/>
            <person name="Cox S.R."/>
            <person name="Kirkpatrick S.J."/>
            <person name="Rahman N."/>
            <person name="Friedman J.M."/>
            <person name="Heng H.H.Q."/>
            <person name="Pelicci P.G."/>
            <person name="Lo-Coco F."/>
            <person name="Belloni E."/>
            <person name="Shaffer L.G."/>
            <person name="Pober B."/>
            <person name="Morton C.C."/>
            <person name="Gusella J.F."/>
            <person name="Bruns G.A.P."/>
            <person name="Korf B.R."/>
            <person name="Quade B.J."/>
            <person name="Ligon A.H."/>
            <person name="Ferguson H."/>
            <person name="Higgins A.W."/>
            <person name="Leach N.T."/>
            <person name="Herrick S.R."/>
            <person name="Lemyre E."/>
            <person name="Farra C.G."/>
            <person name="Kim H.-G."/>
            <person name="Summers A.M."/>
            <person name="Gripp K.W."/>
            <person name="Roberts W."/>
            <person name="Szatmari P."/>
            <person name="Winsor E.J.T."/>
            <person name="Grzeschik K.-H."/>
            <person name="Teebi A."/>
            <person name="Minassian B.A."/>
            <person name="Kere J."/>
            <person name="Armengol L."/>
            <person name="Pujana M.A."/>
            <person name="Estivill X."/>
            <person name="Wilson M.D."/>
            <person name="Koop B.F."/>
            <person name="Tosi S."/>
            <person name="Moore G.E."/>
            <person name="Boright A.P."/>
            <person name="Zlotorynski E."/>
            <person name="Kerem B."/>
            <person name="Kroisel P.M."/>
            <person name="Petek E."/>
            <person name="Oscier D.G."/>
            <person name="Mould S.J."/>
            <person name="Doehner H."/>
            <person name="Doehner K."/>
            <person name="Rommens J.M."/>
            <person name="Vincent J.B."/>
            <person name="Venter J.C."/>
            <person name="Li P.W."/>
            <person name="Mural R.J."/>
            <person name="Adams M.D."/>
            <person name="Tsui L.-C."/>
        </authorList>
    </citation>
    <scope>NUCLEOTIDE SEQUENCE [LARGE SCALE GENOMIC DNA]</scope>
    <scope>VARIANT LEU-29</scope>
</reference>
<reference key="4">
    <citation type="journal article" date="2004" name="Genome Res.">
        <title>The status, quality, and expansion of the NIH full-length cDNA project: the Mammalian Gene Collection (MGC).</title>
        <authorList>
            <consortium name="The MGC Project Team"/>
        </authorList>
    </citation>
    <scope>NUCLEOTIDE SEQUENCE [LARGE SCALE MRNA]</scope>
    <scope>VARIANTS GLN-7; GLU-11 AND LEU-29</scope>
    <source>
        <tissue>Brain</tissue>
    </source>
</reference>
<reference key="5">
    <citation type="journal article" date="2006" name="Science">
        <title>The consensus coding sequences of human breast and colorectal cancers.</title>
        <authorList>
            <person name="Sjoeblom T."/>
            <person name="Jones S."/>
            <person name="Wood L.D."/>
            <person name="Parsons D.W."/>
            <person name="Lin J."/>
            <person name="Barber T.D."/>
            <person name="Mandelker D."/>
            <person name="Leary R.J."/>
            <person name="Ptak J."/>
            <person name="Silliman N."/>
            <person name="Szabo S."/>
            <person name="Buckhaults P."/>
            <person name="Farrell C."/>
            <person name="Meeh P."/>
            <person name="Markowitz S.D."/>
            <person name="Willis J."/>
            <person name="Dawson D."/>
            <person name="Willson J.K.V."/>
            <person name="Gazdar A.F."/>
            <person name="Hartigan J."/>
            <person name="Wu L."/>
            <person name="Liu C."/>
            <person name="Parmigiani G."/>
            <person name="Park B.H."/>
            <person name="Bachman K.E."/>
            <person name="Papadopoulos N."/>
            <person name="Vogelstein B."/>
            <person name="Kinzler K.W."/>
            <person name="Velculescu V.E."/>
        </authorList>
    </citation>
    <scope>VARIANT [LARGE SCALE ANALYSIS] GLU-112</scope>
</reference>
<reference key="6">
    <citation type="journal article" date="2015" name="J. Hematol. Oncol.">
        <title>TMEM140 is associated with the prognosis of glioma by promoting cell viability and invasion.</title>
        <authorList>
            <person name="Li B."/>
            <person name="Huang M.Z."/>
            <person name="Wang X.Q."/>
            <person name="Tao B.B."/>
            <person name="Zhong J."/>
            <person name="Wang X.H."/>
            <person name="Zhang W.C."/>
            <person name="Li S.T."/>
        </authorList>
    </citation>
    <scope>TISSUE SPECIFICITY</scope>
</reference>
<organism>
    <name type="scientific">Homo sapiens</name>
    <name type="common">Human</name>
    <dbReference type="NCBI Taxonomy" id="9606"/>
    <lineage>
        <taxon>Eukaryota</taxon>
        <taxon>Metazoa</taxon>
        <taxon>Chordata</taxon>
        <taxon>Craniata</taxon>
        <taxon>Vertebrata</taxon>
        <taxon>Euteleostomi</taxon>
        <taxon>Mammalia</taxon>
        <taxon>Eutheria</taxon>
        <taxon>Euarchontoglires</taxon>
        <taxon>Primates</taxon>
        <taxon>Haplorrhini</taxon>
        <taxon>Catarrhini</taxon>
        <taxon>Hominidae</taxon>
        <taxon>Homo</taxon>
    </lineage>
</organism>
<sequence>MAGPRPRWRDQLLFMSIIVLVIVVICLMFYALLWEAGNLTDLPNLRIGFYNFCLWNEDTSTLQCHQFPELEALGVPRVGLGLARLGVYGSLVLTLFAPQPLLLAQCNSDERAWRLAVGFLAVSSVLLAGGLGLFLSYVWKWVRLSLPGPGFLALGSAQALLILLLIAMAVFPLRAERAESKLESC</sequence>
<accession>Q9NV12</accession>
<accession>A4D1P9</accession>
<accession>Q8WUC3</accession>
<evidence type="ECO:0000255" key="1"/>
<evidence type="ECO:0000269" key="2">
    <source>
    </source>
</evidence>
<evidence type="ECO:0000269" key="3">
    <source>
    </source>
</evidence>
<evidence type="ECO:0000269" key="4">
    <source>
    </source>
</evidence>
<evidence type="ECO:0000269" key="5">
    <source>
    </source>
</evidence>
<evidence type="ECO:0000269" key="6">
    <source>
    </source>
</evidence>
<evidence type="ECO:0000305" key="7"/>
<gene>
    <name type="primary">TMEM140</name>
</gene>
<feature type="chain" id="PRO_0000274357" description="Transmembrane protein 140">
    <location>
        <begin position="1"/>
        <end position="185"/>
    </location>
</feature>
<feature type="topological domain" description="Cytoplasmic" evidence="1">
    <location>
        <begin position="1"/>
        <end position="11"/>
    </location>
</feature>
<feature type="transmembrane region" description="Helical" evidence="1">
    <location>
        <begin position="12"/>
        <end position="32"/>
    </location>
</feature>
<feature type="topological domain" description="Extracellular" evidence="1">
    <location>
        <begin position="33"/>
        <end position="77"/>
    </location>
</feature>
<feature type="transmembrane region" description="Helical" evidence="1">
    <location>
        <begin position="78"/>
        <end position="98"/>
    </location>
</feature>
<feature type="topological domain" description="Cytoplasmic" evidence="1">
    <location>
        <begin position="99"/>
        <end position="114"/>
    </location>
</feature>
<feature type="transmembrane region" description="Helical" evidence="1">
    <location>
        <begin position="115"/>
        <end position="135"/>
    </location>
</feature>
<feature type="topological domain" description="Extracellular" evidence="1">
    <location>
        <begin position="136"/>
        <end position="150"/>
    </location>
</feature>
<feature type="transmembrane region" description="Helical" evidence="1">
    <location>
        <begin position="151"/>
        <end position="171"/>
    </location>
</feature>
<feature type="topological domain" description="Cytoplasmic" evidence="1">
    <location>
        <begin position="172"/>
        <end position="185"/>
    </location>
</feature>
<feature type="glycosylation site" description="N-linked (GlcNAc...) asparagine" evidence="1">
    <location>
        <position position="38"/>
    </location>
</feature>
<feature type="sequence variant" id="VAR_030262" description="In dbSNP:rs292500.">
    <original>P</original>
    <variation>S</variation>
    <location>
        <position position="6"/>
    </location>
</feature>
<feature type="sequence variant" id="VAR_030263" description="In dbSNP:rs3800592." evidence="4">
    <original>R</original>
    <variation>Q</variation>
    <location>
        <position position="7"/>
    </location>
</feature>
<feature type="sequence variant" id="VAR_030264" description="In dbSNP:rs11558290." evidence="4">
    <original>Q</original>
    <variation>E</variation>
    <location>
        <position position="11"/>
    </location>
</feature>
<feature type="sequence variant" id="VAR_030265" description="In dbSNP:rs292501." evidence="2 3 4">
    <original>F</original>
    <variation>L</variation>
    <location>
        <position position="29"/>
    </location>
</feature>
<feature type="sequence variant" id="VAR_035670" description="In a colorectal cancer sample; somatic mutation; dbSNP:rs292502." evidence="5">
    <original>A</original>
    <variation>E</variation>
    <location>
        <position position="112"/>
    </location>
</feature>